<keyword id="KW-0963">Cytoplasm</keyword>
<keyword id="KW-0489">Methyltransferase</keyword>
<keyword id="KW-1185">Reference proteome</keyword>
<keyword id="KW-0694">RNA-binding</keyword>
<keyword id="KW-0698">rRNA processing</keyword>
<keyword id="KW-0949">S-adenosyl-L-methionine</keyword>
<keyword id="KW-0808">Transferase</keyword>
<reference key="1">
    <citation type="journal article" date="2005" name="Nucleic Acids Res.">
        <title>The genome sequence of Xanthomonas oryzae pathovar oryzae KACC10331, the bacterial blight pathogen of rice.</title>
        <authorList>
            <person name="Lee B.-M."/>
            <person name="Park Y.-J."/>
            <person name="Park D.-S."/>
            <person name="Kang H.-W."/>
            <person name="Kim J.-G."/>
            <person name="Song E.-S."/>
            <person name="Park I.-C."/>
            <person name="Yoon U.-H."/>
            <person name="Hahn J.-H."/>
            <person name="Koo B.-S."/>
            <person name="Lee G.-B."/>
            <person name="Kim H."/>
            <person name="Park H.-S."/>
            <person name="Yoon K.-O."/>
            <person name="Kim J.-H."/>
            <person name="Jung C.-H."/>
            <person name="Koh N.-H."/>
            <person name="Seo J.-S."/>
            <person name="Go S.-J."/>
        </authorList>
    </citation>
    <scope>NUCLEOTIDE SEQUENCE [LARGE SCALE GENOMIC DNA]</scope>
    <source>
        <strain>KACC10331 / KXO85</strain>
    </source>
</reference>
<dbReference type="EC" id="2.1.1.182" evidence="1"/>
<dbReference type="EMBL" id="AE013598">
    <property type="protein sequence ID" value="AAW77002.1"/>
    <property type="molecule type" value="Genomic_DNA"/>
</dbReference>
<dbReference type="SMR" id="Q5GWB9"/>
<dbReference type="STRING" id="291331.XOO3748"/>
<dbReference type="KEGG" id="xoo:XOO3748"/>
<dbReference type="HOGENOM" id="CLU_041220_0_1_6"/>
<dbReference type="Proteomes" id="UP000006735">
    <property type="component" value="Chromosome"/>
</dbReference>
<dbReference type="GO" id="GO:0005829">
    <property type="term" value="C:cytosol"/>
    <property type="evidence" value="ECO:0007669"/>
    <property type="project" value="TreeGrafter"/>
</dbReference>
<dbReference type="GO" id="GO:0052908">
    <property type="term" value="F:16S rRNA (adenine(1518)-N(6)/adenine(1519)-N(6))-dimethyltransferase activity"/>
    <property type="evidence" value="ECO:0007669"/>
    <property type="project" value="UniProtKB-EC"/>
</dbReference>
<dbReference type="GO" id="GO:0003723">
    <property type="term" value="F:RNA binding"/>
    <property type="evidence" value="ECO:0007669"/>
    <property type="project" value="UniProtKB-KW"/>
</dbReference>
<dbReference type="FunFam" id="1.10.8.100:FF:000001">
    <property type="entry name" value="Ribosomal RNA small subunit methyltransferase A"/>
    <property type="match status" value="1"/>
</dbReference>
<dbReference type="FunFam" id="3.40.50.150:FF:000222">
    <property type="entry name" value="Ribosomal RNA small subunit methyltransferase A"/>
    <property type="match status" value="1"/>
</dbReference>
<dbReference type="Gene3D" id="1.10.8.100">
    <property type="entry name" value="Ribosomal RNA adenine dimethylase-like, domain 2"/>
    <property type="match status" value="1"/>
</dbReference>
<dbReference type="Gene3D" id="3.40.50.150">
    <property type="entry name" value="Vaccinia Virus protein VP39"/>
    <property type="match status" value="1"/>
</dbReference>
<dbReference type="HAMAP" id="MF_00607">
    <property type="entry name" value="16SrRNA_methyltr_A"/>
    <property type="match status" value="1"/>
</dbReference>
<dbReference type="InterPro" id="IPR001737">
    <property type="entry name" value="KsgA/Erm"/>
</dbReference>
<dbReference type="InterPro" id="IPR023165">
    <property type="entry name" value="rRNA_Ade_diMease-like_C"/>
</dbReference>
<dbReference type="InterPro" id="IPR020596">
    <property type="entry name" value="rRNA_Ade_Mease_Trfase_CS"/>
</dbReference>
<dbReference type="InterPro" id="IPR020598">
    <property type="entry name" value="rRNA_Ade_methylase_Trfase_N"/>
</dbReference>
<dbReference type="InterPro" id="IPR011530">
    <property type="entry name" value="rRNA_adenine_dimethylase"/>
</dbReference>
<dbReference type="InterPro" id="IPR029063">
    <property type="entry name" value="SAM-dependent_MTases_sf"/>
</dbReference>
<dbReference type="NCBIfam" id="TIGR00755">
    <property type="entry name" value="ksgA"/>
    <property type="match status" value="1"/>
</dbReference>
<dbReference type="PANTHER" id="PTHR11727">
    <property type="entry name" value="DIMETHYLADENOSINE TRANSFERASE"/>
    <property type="match status" value="1"/>
</dbReference>
<dbReference type="PANTHER" id="PTHR11727:SF7">
    <property type="entry name" value="DIMETHYLADENOSINE TRANSFERASE-RELATED"/>
    <property type="match status" value="1"/>
</dbReference>
<dbReference type="Pfam" id="PF00398">
    <property type="entry name" value="RrnaAD"/>
    <property type="match status" value="1"/>
</dbReference>
<dbReference type="SMART" id="SM00650">
    <property type="entry name" value="rADc"/>
    <property type="match status" value="1"/>
</dbReference>
<dbReference type="SUPFAM" id="SSF53335">
    <property type="entry name" value="S-adenosyl-L-methionine-dependent methyltransferases"/>
    <property type="match status" value="1"/>
</dbReference>
<dbReference type="PROSITE" id="PS01131">
    <property type="entry name" value="RRNA_A_DIMETH"/>
    <property type="match status" value="1"/>
</dbReference>
<dbReference type="PROSITE" id="PS51689">
    <property type="entry name" value="SAM_RNA_A_N6_MT"/>
    <property type="match status" value="1"/>
</dbReference>
<comment type="function">
    <text evidence="1">Specifically dimethylates two adjacent adenosines (A1518 and A1519) in the loop of a conserved hairpin near the 3'-end of 16S rRNA in the 30S particle. May play a critical role in biogenesis of 30S subunits.</text>
</comment>
<comment type="catalytic activity">
    <reaction evidence="1">
        <text>adenosine(1518)/adenosine(1519) in 16S rRNA + 4 S-adenosyl-L-methionine = N(6)-dimethyladenosine(1518)/N(6)-dimethyladenosine(1519) in 16S rRNA + 4 S-adenosyl-L-homocysteine + 4 H(+)</text>
        <dbReference type="Rhea" id="RHEA:19609"/>
        <dbReference type="Rhea" id="RHEA-COMP:10232"/>
        <dbReference type="Rhea" id="RHEA-COMP:10233"/>
        <dbReference type="ChEBI" id="CHEBI:15378"/>
        <dbReference type="ChEBI" id="CHEBI:57856"/>
        <dbReference type="ChEBI" id="CHEBI:59789"/>
        <dbReference type="ChEBI" id="CHEBI:74411"/>
        <dbReference type="ChEBI" id="CHEBI:74493"/>
        <dbReference type="EC" id="2.1.1.182"/>
    </reaction>
</comment>
<comment type="subcellular location">
    <subcellularLocation>
        <location evidence="1">Cytoplasm</location>
    </subcellularLocation>
</comment>
<comment type="similarity">
    <text evidence="1">Belongs to the class I-like SAM-binding methyltransferase superfamily. rRNA adenine N(6)-methyltransferase family. RsmA subfamily.</text>
</comment>
<feature type="chain" id="PRO_0000101645" description="Ribosomal RNA small subunit methyltransferase A">
    <location>
        <begin position="1"/>
        <end position="262"/>
    </location>
</feature>
<feature type="binding site" evidence="1">
    <location>
        <position position="16"/>
    </location>
    <ligand>
        <name>S-adenosyl-L-methionine</name>
        <dbReference type="ChEBI" id="CHEBI:59789"/>
    </ligand>
</feature>
<feature type="binding site" evidence="1">
    <location>
        <position position="18"/>
    </location>
    <ligand>
        <name>S-adenosyl-L-methionine</name>
        <dbReference type="ChEBI" id="CHEBI:59789"/>
    </ligand>
</feature>
<feature type="binding site" evidence="1">
    <location>
        <position position="43"/>
    </location>
    <ligand>
        <name>S-adenosyl-L-methionine</name>
        <dbReference type="ChEBI" id="CHEBI:59789"/>
    </ligand>
</feature>
<feature type="binding site" evidence="1">
    <location>
        <position position="64"/>
    </location>
    <ligand>
        <name>S-adenosyl-L-methionine</name>
        <dbReference type="ChEBI" id="CHEBI:59789"/>
    </ligand>
</feature>
<feature type="binding site" evidence="1">
    <location>
        <position position="89"/>
    </location>
    <ligand>
        <name>S-adenosyl-L-methionine</name>
        <dbReference type="ChEBI" id="CHEBI:59789"/>
    </ligand>
</feature>
<feature type="binding site" evidence="1">
    <location>
        <position position="109"/>
    </location>
    <ligand>
        <name>S-adenosyl-L-methionine</name>
        <dbReference type="ChEBI" id="CHEBI:59789"/>
    </ligand>
</feature>
<protein>
    <recommendedName>
        <fullName evidence="1">Ribosomal RNA small subunit methyltransferase A</fullName>
        <ecNumber evidence="1">2.1.1.182</ecNumber>
    </recommendedName>
    <alternativeName>
        <fullName evidence="1">16S rRNA (adenine(1518)-N(6)/adenine(1519)-N(6))-dimethyltransferase</fullName>
    </alternativeName>
    <alternativeName>
        <fullName evidence="1">16S rRNA dimethyladenosine transferase</fullName>
    </alternativeName>
    <alternativeName>
        <fullName evidence="1">16S rRNA dimethylase</fullName>
    </alternativeName>
    <alternativeName>
        <fullName evidence="1">S-adenosylmethionine-6-N', N'-adenosyl(rRNA) dimethyltransferase</fullName>
    </alternativeName>
</protein>
<sequence length="262" mass="28537">MNSSFSAPAKKSLGQHFLADRYYIDRIVQAVDPRAGQHLVEIGPGQGAITFPLLRKHGALTVIEFDRDLIAPLTEAAAPIGALSIIHRDVLSVDFTALADGTPIRLVGNLPYNISSPILFHALDHAAVVADMHFMLQKEVVDRMAAGPGSKVYGRLSVMLQAYCDVTALFVVPPGAFRPPPKVDSAVVRLVPRDPATVHINDRRRFADVVRAGFGQRRKTLRNALSTVCEPAHFEAAQVRPDARAEQLEVADFIRLANVEPA</sequence>
<gene>
    <name evidence="1" type="primary">rsmA</name>
    <name evidence="1" type="synonym">ksgA</name>
    <name type="ordered locus">XOO3748</name>
</gene>
<proteinExistence type="inferred from homology"/>
<name>RSMA_XANOR</name>
<accession>Q5GWB9</accession>
<organism>
    <name type="scientific">Xanthomonas oryzae pv. oryzae (strain KACC10331 / KXO85)</name>
    <dbReference type="NCBI Taxonomy" id="291331"/>
    <lineage>
        <taxon>Bacteria</taxon>
        <taxon>Pseudomonadati</taxon>
        <taxon>Pseudomonadota</taxon>
        <taxon>Gammaproteobacteria</taxon>
        <taxon>Lysobacterales</taxon>
        <taxon>Lysobacteraceae</taxon>
        <taxon>Xanthomonas</taxon>
    </lineage>
</organism>
<evidence type="ECO:0000255" key="1">
    <source>
        <dbReference type="HAMAP-Rule" id="MF_00607"/>
    </source>
</evidence>